<protein>
    <recommendedName>
        <fullName evidence="1">Sugar fermentation stimulation protein homolog</fullName>
    </recommendedName>
</protein>
<accession>B8FZM2</accession>
<proteinExistence type="inferred from homology"/>
<reference key="1">
    <citation type="journal article" date="2012" name="BMC Microbiol.">
        <title>Genome sequence of Desulfitobacterium hafniense DCB-2, a Gram-positive anaerobe capable of dehalogenation and metal reduction.</title>
        <authorList>
            <person name="Kim S.H."/>
            <person name="Harzman C."/>
            <person name="Davis J.K."/>
            <person name="Hutcheson R."/>
            <person name="Broderick J.B."/>
            <person name="Marsh T.L."/>
            <person name="Tiedje J.M."/>
        </authorList>
    </citation>
    <scope>NUCLEOTIDE SEQUENCE [LARGE SCALE GENOMIC DNA]</scope>
    <source>
        <strain>DSM 10664 / DCB-2</strain>
    </source>
</reference>
<gene>
    <name evidence="1" type="primary">sfsA</name>
    <name type="ordered locus">Dhaf_1036</name>
</gene>
<dbReference type="EMBL" id="CP001336">
    <property type="protein sequence ID" value="ACL19096.1"/>
    <property type="molecule type" value="Genomic_DNA"/>
</dbReference>
<dbReference type="RefSeq" id="WP_015943162.1">
    <property type="nucleotide sequence ID" value="NC_011830.1"/>
</dbReference>
<dbReference type="SMR" id="B8FZM2"/>
<dbReference type="KEGG" id="dhd:Dhaf_1036"/>
<dbReference type="HOGENOM" id="CLU_052299_1_0_9"/>
<dbReference type="Proteomes" id="UP000007726">
    <property type="component" value="Chromosome"/>
</dbReference>
<dbReference type="GO" id="GO:0003677">
    <property type="term" value="F:DNA binding"/>
    <property type="evidence" value="ECO:0007669"/>
    <property type="project" value="InterPro"/>
</dbReference>
<dbReference type="CDD" id="cd22359">
    <property type="entry name" value="SfsA-like_bacterial"/>
    <property type="match status" value="1"/>
</dbReference>
<dbReference type="FunFam" id="2.40.50.580:FF:000002">
    <property type="entry name" value="Sugar fermentation stimulation protein homolog"/>
    <property type="match status" value="1"/>
</dbReference>
<dbReference type="Gene3D" id="2.40.50.580">
    <property type="match status" value="1"/>
</dbReference>
<dbReference type="Gene3D" id="3.40.1350.60">
    <property type="match status" value="1"/>
</dbReference>
<dbReference type="HAMAP" id="MF_00095">
    <property type="entry name" value="SfsA"/>
    <property type="match status" value="1"/>
</dbReference>
<dbReference type="InterPro" id="IPR005224">
    <property type="entry name" value="SfsA"/>
</dbReference>
<dbReference type="InterPro" id="IPR040452">
    <property type="entry name" value="SfsA_C"/>
</dbReference>
<dbReference type="InterPro" id="IPR041465">
    <property type="entry name" value="SfsA_N"/>
</dbReference>
<dbReference type="NCBIfam" id="TIGR00230">
    <property type="entry name" value="sfsA"/>
    <property type="match status" value="1"/>
</dbReference>
<dbReference type="PANTHER" id="PTHR30545">
    <property type="entry name" value="SUGAR FERMENTATION STIMULATION PROTEIN A"/>
    <property type="match status" value="1"/>
</dbReference>
<dbReference type="PANTHER" id="PTHR30545:SF2">
    <property type="entry name" value="SUGAR FERMENTATION STIMULATION PROTEIN A"/>
    <property type="match status" value="1"/>
</dbReference>
<dbReference type="Pfam" id="PF03749">
    <property type="entry name" value="SfsA"/>
    <property type="match status" value="1"/>
</dbReference>
<dbReference type="Pfam" id="PF17746">
    <property type="entry name" value="SfsA_N"/>
    <property type="match status" value="1"/>
</dbReference>
<sequence length="228" mass="26288">MKYTNIREGQFLSRPNRFIAKVEIDGKEEICHVKNTGRCRELLIPGVTVFLQEADFEHRKTKYDLIGVRKGNRLINMDSQVPNKVFREWLEKGYFQELQHIKQEQTFRNSRFDFYLEAGQRKIFVEVKGVTLEEEGVALFPDAPTERGVKHLRELSQAVAAGYEAYVVFIIQMKDIHYFTPNIKTHQAFGDSLIQAEKQGVKILALDCEVTEDSIEAGDFVTVKLVEG</sequence>
<name>SFSA_DESHD</name>
<evidence type="ECO:0000255" key="1">
    <source>
        <dbReference type="HAMAP-Rule" id="MF_00095"/>
    </source>
</evidence>
<feature type="chain" id="PRO_1000196969" description="Sugar fermentation stimulation protein homolog">
    <location>
        <begin position="1"/>
        <end position="228"/>
    </location>
</feature>
<organism>
    <name type="scientific">Desulfitobacterium hafniense (strain DSM 10664 / DCB-2)</name>
    <dbReference type="NCBI Taxonomy" id="272564"/>
    <lineage>
        <taxon>Bacteria</taxon>
        <taxon>Bacillati</taxon>
        <taxon>Bacillota</taxon>
        <taxon>Clostridia</taxon>
        <taxon>Eubacteriales</taxon>
        <taxon>Desulfitobacteriaceae</taxon>
        <taxon>Desulfitobacterium</taxon>
    </lineage>
</organism>
<comment type="similarity">
    <text evidence="1">Belongs to the SfsA family.</text>
</comment>